<reference key="1">
    <citation type="journal article" date="2008" name="Genome Biol.">
        <title>Encapsulated in silica: genome, proteome and physiology of the thermophilic bacterium Anoxybacillus flavithermus WK1.</title>
        <authorList>
            <person name="Saw J.H."/>
            <person name="Mountain B.W."/>
            <person name="Feng L."/>
            <person name="Omelchenko M.V."/>
            <person name="Hou S."/>
            <person name="Saito J.A."/>
            <person name="Stott M.B."/>
            <person name="Li D."/>
            <person name="Zhao G."/>
            <person name="Wu J."/>
            <person name="Galperin M.Y."/>
            <person name="Koonin E.V."/>
            <person name="Makarova K.S."/>
            <person name="Wolf Y.I."/>
            <person name="Rigden D.J."/>
            <person name="Dunfield P.F."/>
            <person name="Wang L."/>
            <person name="Alam M."/>
        </authorList>
    </citation>
    <scope>NUCLEOTIDE SEQUENCE [LARGE SCALE GENOMIC DNA]</scope>
    <source>
        <strain>DSM 21510 / WK1</strain>
    </source>
</reference>
<dbReference type="EC" id="2.4.2.29" evidence="1"/>
<dbReference type="EMBL" id="CP000922">
    <property type="protein sequence ID" value="ACJ33095.1"/>
    <property type="molecule type" value="Genomic_DNA"/>
</dbReference>
<dbReference type="RefSeq" id="WP_012574398.1">
    <property type="nucleotide sequence ID" value="NC_011567.1"/>
</dbReference>
<dbReference type="SMR" id="B7GFN1"/>
<dbReference type="STRING" id="491915.Aflv_0716"/>
<dbReference type="GeneID" id="7036973"/>
<dbReference type="KEGG" id="afl:Aflv_0716"/>
<dbReference type="PATRIC" id="fig|491915.6.peg.732"/>
<dbReference type="eggNOG" id="COG0343">
    <property type="taxonomic scope" value="Bacteria"/>
</dbReference>
<dbReference type="HOGENOM" id="CLU_022060_0_1_9"/>
<dbReference type="UniPathway" id="UPA00392"/>
<dbReference type="Proteomes" id="UP000000742">
    <property type="component" value="Chromosome"/>
</dbReference>
<dbReference type="GO" id="GO:0005829">
    <property type="term" value="C:cytosol"/>
    <property type="evidence" value="ECO:0007669"/>
    <property type="project" value="TreeGrafter"/>
</dbReference>
<dbReference type="GO" id="GO:0046872">
    <property type="term" value="F:metal ion binding"/>
    <property type="evidence" value="ECO:0007669"/>
    <property type="project" value="UniProtKB-KW"/>
</dbReference>
<dbReference type="GO" id="GO:0008479">
    <property type="term" value="F:tRNA-guanosine(34) queuine transglycosylase activity"/>
    <property type="evidence" value="ECO:0007669"/>
    <property type="project" value="UniProtKB-UniRule"/>
</dbReference>
<dbReference type="GO" id="GO:0008616">
    <property type="term" value="P:queuosine biosynthetic process"/>
    <property type="evidence" value="ECO:0007669"/>
    <property type="project" value="UniProtKB-UniRule"/>
</dbReference>
<dbReference type="GO" id="GO:0002099">
    <property type="term" value="P:tRNA wobble guanine modification"/>
    <property type="evidence" value="ECO:0007669"/>
    <property type="project" value="TreeGrafter"/>
</dbReference>
<dbReference type="GO" id="GO:0101030">
    <property type="term" value="P:tRNA-guanine transglycosylation"/>
    <property type="evidence" value="ECO:0007669"/>
    <property type="project" value="InterPro"/>
</dbReference>
<dbReference type="FunFam" id="3.20.20.105:FF:000001">
    <property type="entry name" value="Queuine tRNA-ribosyltransferase"/>
    <property type="match status" value="1"/>
</dbReference>
<dbReference type="Gene3D" id="3.20.20.105">
    <property type="entry name" value="Queuine tRNA-ribosyltransferase-like"/>
    <property type="match status" value="1"/>
</dbReference>
<dbReference type="HAMAP" id="MF_00168">
    <property type="entry name" value="Q_tRNA_Tgt"/>
    <property type="match status" value="1"/>
</dbReference>
<dbReference type="InterPro" id="IPR050076">
    <property type="entry name" value="ArchSynthase1/Queuine_TRR"/>
</dbReference>
<dbReference type="InterPro" id="IPR004803">
    <property type="entry name" value="TGT"/>
</dbReference>
<dbReference type="InterPro" id="IPR036511">
    <property type="entry name" value="TGT-like_sf"/>
</dbReference>
<dbReference type="InterPro" id="IPR002616">
    <property type="entry name" value="tRNA_ribo_trans-like"/>
</dbReference>
<dbReference type="NCBIfam" id="TIGR00430">
    <property type="entry name" value="Q_tRNA_tgt"/>
    <property type="match status" value="1"/>
</dbReference>
<dbReference type="NCBIfam" id="TIGR00449">
    <property type="entry name" value="tgt_general"/>
    <property type="match status" value="1"/>
</dbReference>
<dbReference type="PANTHER" id="PTHR46499">
    <property type="entry name" value="QUEUINE TRNA-RIBOSYLTRANSFERASE"/>
    <property type="match status" value="1"/>
</dbReference>
<dbReference type="PANTHER" id="PTHR46499:SF1">
    <property type="entry name" value="QUEUINE TRNA-RIBOSYLTRANSFERASE"/>
    <property type="match status" value="1"/>
</dbReference>
<dbReference type="Pfam" id="PF01702">
    <property type="entry name" value="TGT"/>
    <property type="match status" value="1"/>
</dbReference>
<dbReference type="SUPFAM" id="SSF51713">
    <property type="entry name" value="tRNA-guanine transglycosylase"/>
    <property type="match status" value="1"/>
</dbReference>
<organism>
    <name type="scientific">Anoxybacillus flavithermus (strain DSM 21510 / WK1)</name>
    <dbReference type="NCBI Taxonomy" id="491915"/>
    <lineage>
        <taxon>Bacteria</taxon>
        <taxon>Bacillati</taxon>
        <taxon>Bacillota</taxon>
        <taxon>Bacilli</taxon>
        <taxon>Bacillales</taxon>
        <taxon>Anoxybacillaceae</taxon>
        <taxon>Anoxybacillus</taxon>
    </lineage>
</organism>
<evidence type="ECO:0000255" key="1">
    <source>
        <dbReference type="HAMAP-Rule" id="MF_00168"/>
    </source>
</evidence>
<sequence length="379" mass="43161">MTPIRYELIKTCKQTGARLGILHTPHGSFETPMFMPVGTLATVKTLSPEELKEMGAGVILSNTYHLWLRPGHDIVKEAGGLHSFMNWDRGILTDSGGFQVFSLSEFRRIEEEGVYFRNHLNGDQLFLSPEKAMEIQNALGSDIMMAFDECPPYPATYEYMKRSVERTSRWAERCLKAHQRPNEQGLFGIVQGGEFEDLRKQSAQDLVSLDFPGYAVGGLSVGEPKEVMNRVLEFTTPLLPANKPRYLMGVGSPDSLIDGAIRGIDMFDCVLPTRIGRNGTVMTSEGRVVIKNAKYARDFTPLDPNCDCYTCRNYTRAYIRHLIKCDETFGIRLTSYHNVYFLIKLMEQVRQAIREDRLGDFREQFFEQYGFNKPNAKNF</sequence>
<keyword id="KW-0328">Glycosyltransferase</keyword>
<keyword id="KW-0479">Metal-binding</keyword>
<keyword id="KW-0671">Queuosine biosynthesis</keyword>
<keyword id="KW-0808">Transferase</keyword>
<keyword id="KW-0819">tRNA processing</keyword>
<keyword id="KW-0862">Zinc</keyword>
<gene>
    <name evidence="1" type="primary">tgt</name>
    <name type="ordered locus">Aflv_0716</name>
</gene>
<proteinExistence type="inferred from homology"/>
<accession>B7GFN1</accession>
<comment type="function">
    <text evidence="1">Catalyzes the base-exchange of a guanine (G) residue with the queuine precursor 7-aminomethyl-7-deazaguanine (PreQ1) at position 34 (anticodon wobble position) in tRNAs with GU(N) anticodons (tRNA-Asp, -Asn, -His and -Tyr). Catalysis occurs through a double-displacement mechanism. The nucleophile active site attacks the C1' of nucleotide 34 to detach the guanine base from the RNA, forming a covalent enzyme-RNA intermediate. The proton acceptor active site deprotonates the incoming PreQ1, allowing a nucleophilic attack on the C1' of the ribose to form the product. After dissociation, two additional enzymatic reactions on the tRNA convert PreQ1 to queuine (Q), resulting in the hypermodified nucleoside queuosine (7-(((4,5-cis-dihydroxy-2-cyclopenten-1-yl)amino)methyl)-7-deazaguanosine).</text>
</comment>
<comment type="catalytic activity">
    <reaction evidence="1">
        <text>7-aminomethyl-7-carbaguanine + guanosine(34) in tRNA = 7-aminomethyl-7-carbaguanosine(34) in tRNA + guanine</text>
        <dbReference type="Rhea" id="RHEA:24104"/>
        <dbReference type="Rhea" id="RHEA-COMP:10341"/>
        <dbReference type="Rhea" id="RHEA-COMP:10342"/>
        <dbReference type="ChEBI" id="CHEBI:16235"/>
        <dbReference type="ChEBI" id="CHEBI:58703"/>
        <dbReference type="ChEBI" id="CHEBI:74269"/>
        <dbReference type="ChEBI" id="CHEBI:82833"/>
        <dbReference type="EC" id="2.4.2.29"/>
    </reaction>
</comment>
<comment type="cofactor">
    <cofactor evidence="1">
        <name>Zn(2+)</name>
        <dbReference type="ChEBI" id="CHEBI:29105"/>
    </cofactor>
    <text evidence="1">Binds 1 zinc ion per subunit.</text>
</comment>
<comment type="pathway">
    <text evidence="1">tRNA modification; tRNA-queuosine biosynthesis.</text>
</comment>
<comment type="subunit">
    <text evidence="1">Homodimer. Within each dimer, one monomer is responsible for RNA recognition and catalysis, while the other monomer binds to the replacement base PreQ1.</text>
</comment>
<comment type="similarity">
    <text evidence="1">Belongs to the queuine tRNA-ribosyltransferase family.</text>
</comment>
<protein>
    <recommendedName>
        <fullName evidence="1">Queuine tRNA-ribosyltransferase</fullName>
        <ecNumber evidence="1">2.4.2.29</ecNumber>
    </recommendedName>
    <alternativeName>
        <fullName evidence="1">Guanine insertion enzyme</fullName>
    </alternativeName>
    <alternativeName>
        <fullName evidence="1">tRNA-guanine transglycosylase</fullName>
    </alternativeName>
</protein>
<feature type="chain" id="PRO_1000197976" description="Queuine tRNA-ribosyltransferase">
    <location>
        <begin position="1"/>
        <end position="379"/>
    </location>
</feature>
<feature type="region of interest" description="RNA binding" evidence="1">
    <location>
        <begin position="249"/>
        <end position="255"/>
    </location>
</feature>
<feature type="region of interest" description="RNA binding; important for wobble base 34 recognition" evidence="1">
    <location>
        <begin position="273"/>
        <end position="277"/>
    </location>
</feature>
<feature type="active site" description="Proton acceptor" evidence="1">
    <location>
        <position position="94"/>
    </location>
</feature>
<feature type="active site" description="Nucleophile" evidence="1">
    <location>
        <position position="268"/>
    </location>
</feature>
<feature type="binding site" evidence="1">
    <location>
        <begin position="94"/>
        <end position="98"/>
    </location>
    <ligand>
        <name>substrate</name>
    </ligand>
</feature>
<feature type="binding site" evidence="1">
    <location>
        <position position="148"/>
    </location>
    <ligand>
        <name>substrate</name>
    </ligand>
</feature>
<feature type="binding site" evidence="1">
    <location>
        <position position="191"/>
    </location>
    <ligand>
        <name>substrate</name>
    </ligand>
</feature>
<feature type="binding site" evidence="1">
    <location>
        <position position="218"/>
    </location>
    <ligand>
        <name>substrate</name>
    </ligand>
</feature>
<feature type="binding site" evidence="1">
    <location>
        <position position="306"/>
    </location>
    <ligand>
        <name>Zn(2+)</name>
        <dbReference type="ChEBI" id="CHEBI:29105"/>
    </ligand>
</feature>
<feature type="binding site" evidence="1">
    <location>
        <position position="308"/>
    </location>
    <ligand>
        <name>Zn(2+)</name>
        <dbReference type="ChEBI" id="CHEBI:29105"/>
    </ligand>
</feature>
<feature type="binding site" evidence="1">
    <location>
        <position position="311"/>
    </location>
    <ligand>
        <name>Zn(2+)</name>
        <dbReference type="ChEBI" id="CHEBI:29105"/>
    </ligand>
</feature>
<feature type="binding site" evidence="1">
    <location>
        <position position="337"/>
    </location>
    <ligand>
        <name>Zn(2+)</name>
        <dbReference type="ChEBI" id="CHEBI:29105"/>
    </ligand>
</feature>
<name>TGT_ANOFW</name>